<keyword id="KW-0004">4Fe-4S</keyword>
<keyword id="KW-0342">GTP-binding</keyword>
<keyword id="KW-0408">Iron</keyword>
<keyword id="KW-0411">Iron-sulfur</keyword>
<keyword id="KW-0456">Lyase</keyword>
<keyword id="KW-0479">Metal-binding</keyword>
<keyword id="KW-0501">Molybdenum cofactor biosynthesis</keyword>
<keyword id="KW-0547">Nucleotide-binding</keyword>
<keyword id="KW-1185">Reference proteome</keyword>
<keyword id="KW-0949">S-adenosyl-L-methionine</keyword>
<organism>
    <name type="scientific">Salmonella typhimurium (strain LT2 / SGSC1412 / ATCC 700720)</name>
    <dbReference type="NCBI Taxonomy" id="99287"/>
    <lineage>
        <taxon>Bacteria</taxon>
        <taxon>Pseudomonadati</taxon>
        <taxon>Pseudomonadota</taxon>
        <taxon>Gammaproteobacteria</taxon>
        <taxon>Enterobacterales</taxon>
        <taxon>Enterobacteriaceae</taxon>
        <taxon>Salmonella</taxon>
    </lineage>
</organism>
<sequence length="329" mass="37002">MASQLTDAFARKFYYLRLSITDVCNFRCTYCLPDGYKPGGVTNNGFLTVDEIRRVTRAFASLGTEKVRLTGGEPSLRRDFTDIIAAVGENDAIRQIAVTTNGYRLARDAANWREAGLTGVNVSVDSLDARQFHAITGQDKFRQVMAGIDAAFDAGFEKVKVNTVLMRDVNHHQLDTFLAWIQPRPIQLRFIELMETGEGSDLFRKHHISGQVLRDELIKRGWIHQLRQRSDGPAQVFCHPDYAGEIGLIMPYEKDFCATCNRLRVSSVGKLHLCLFGDGGVSLRDLLQDDAQQYALEERISDALREKKQTHFLHQSNTGITQNLSYIGG</sequence>
<proteinExistence type="inferred from homology"/>
<evidence type="ECO:0000255" key="1">
    <source>
        <dbReference type="HAMAP-Rule" id="MF_01225"/>
    </source>
</evidence>
<evidence type="ECO:0000255" key="2">
    <source>
        <dbReference type="PROSITE-ProRule" id="PRU01266"/>
    </source>
</evidence>
<comment type="function">
    <text evidence="1">Catalyzes the cyclization of GTP to (8S)-3',8-cyclo-7,8-dihydroguanosine 5'-triphosphate.</text>
</comment>
<comment type="catalytic activity">
    <reaction evidence="1">
        <text>GTP + AH2 + S-adenosyl-L-methionine = (8S)-3',8-cyclo-7,8-dihydroguanosine 5'-triphosphate + 5'-deoxyadenosine + L-methionine + A + H(+)</text>
        <dbReference type="Rhea" id="RHEA:49576"/>
        <dbReference type="ChEBI" id="CHEBI:13193"/>
        <dbReference type="ChEBI" id="CHEBI:15378"/>
        <dbReference type="ChEBI" id="CHEBI:17319"/>
        <dbReference type="ChEBI" id="CHEBI:17499"/>
        <dbReference type="ChEBI" id="CHEBI:37565"/>
        <dbReference type="ChEBI" id="CHEBI:57844"/>
        <dbReference type="ChEBI" id="CHEBI:59789"/>
        <dbReference type="ChEBI" id="CHEBI:131766"/>
        <dbReference type="EC" id="4.1.99.22"/>
    </reaction>
</comment>
<comment type="cofactor">
    <cofactor evidence="1">
        <name>[4Fe-4S] cluster</name>
        <dbReference type="ChEBI" id="CHEBI:49883"/>
    </cofactor>
    <text evidence="1">Binds 2 [4Fe-4S] clusters. Binds 1 [4Fe-4S] cluster coordinated with 3 cysteines and an exchangeable S-adenosyl-L-methionine and 1 [4Fe-4S] cluster coordinated with 3 cysteines and the GTP-derived substrate.</text>
</comment>
<comment type="pathway">
    <text evidence="1">Cofactor biosynthesis; molybdopterin biosynthesis.</text>
</comment>
<comment type="subunit">
    <text evidence="1">Monomer and homodimer.</text>
</comment>
<comment type="similarity">
    <text evidence="1">Belongs to the radical SAM superfamily. MoaA family.</text>
</comment>
<dbReference type="EC" id="4.1.99.22" evidence="1"/>
<dbReference type="EMBL" id="AE006468">
    <property type="protein sequence ID" value="AAL19739.1"/>
    <property type="molecule type" value="Genomic_DNA"/>
</dbReference>
<dbReference type="RefSeq" id="NP_459780.1">
    <property type="nucleotide sequence ID" value="NC_003197.2"/>
</dbReference>
<dbReference type="RefSeq" id="WP_000168180.1">
    <property type="nucleotide sequence ID" value="NC_003197.2"/>
</dbReference>
<dbReference type="SMR" id="P65386"/>
<dbReference type="STRING" id="99287.STM0802"/>
<dbReference type="PaxDb" id="99287-STM0802"/>
<dbReference type="GeneID" id="1252322"/>
<dbReference type="KEGG" id="stm:STM0802"/>
<dbReference type="PATRIC" id="fig|99287.12.peg.836"/>
<dbReference type="HOGENOM" id="CLU_009273_0_1_6"/>
<dbReference type="OMA" id="QMSECFC"/>
<dbReference type="PhylomeDB" id="P65386"/>
<dbReference type="BioCyc" id="SENT99287:STM0802-MONOMER"/>
<dbReference type="UniPathway" id="UPA00344"/>
<dbReference type="Proteomes" id="UP000001014">
    <property type="component" value="Chromosome"/>
</dbReference>
<dbReference type="GO" id="GO:0051539">
    <property type="term" value="F:4 iron, 4 sulfur cluster binding"/>
    <property type="evidence" value="ECO:0007669"/>
    <property type="project" value="UniProtKB-UniRule"/>
</dbReference>
<dbReference type="GO" id="GO:0061799">
    <property type="term" value="F:cyclic pyranopterin monophosphate synthase activity"/>
    <property type="evidence" value="ECO:0000318"/>
    <property type="project" value="GO_Central"/>
</dbReference>
<dbReference type="GO" id="GO:0061798">
    <property type="term" value="F:GTP 3',8'-cyclase activity"/>
    <property type="evidence" value="ECO:0000318"/>
    <property type="project" value="GO_Central"/>
</dbReference>
<dbReference type="GO" id="GO:0005525">
    <property type="term" value="F:GTP binding"/>
    <property type="evidence" value="ECO:0007669"/>
    <property type="project" value="UniProtKB-UniRule"/>
</dbReference>
<dbReference type="GO" id="GO:0046872">
    <property type="term" value="F:metal ion binding"/>
    <property type="evidence" value="ECO:0007669"/>
    <property type="project" value="UniProtKB-KW"/>
</dbReference>
<dbReference type="GO" id="GO:1904047">
    <property type="term" value="F:S-adenosyl-L-methionine binding"/>
    <property type="evidence" value="ECO:0007669"/>
    <property type="project" value="UniProtKB-UniRule"/>
</dbReference>
<dbReference type="GO" id="GO:0006777">
    <property type="term" value="P:Mo-molybdopterin cofactor biosynthetic process"/>
    <property type="evidence" value="ECO:0000318"/>
    <property type="project" value="GO_Central"/>
</dbReference>
<dbReference type="CDD" id="cd01335">
    <property type="entry name" value="Radical_SAM"/>
    <property type="match status" value="1"/>
</dbReference>
<dbReference type="CDD" id="cd21117">
    <property type="entry name" value="Twitch_MoaA"/>
    <property type="match status" value="1"/>
</dbReference>
<dbReference type="FunFam" id="3.20.20.70:FF:000057">
    <property type="entry name" value="GTP 3',8-cyclase"/>
    <property type="match status" value="1"/>
</dbReference>
<dbReference type="Gene3D" id="3.20.20.70">
    <property type="entry name" value="Aldolase class I"/>
    <property type="match status" value="1"/>
</dbReference>
<dbReference type="HAMAP" id="MF_01225_B">
    <property type="entry name" value="MoaA_B"/>
    <property type="match status" value="1"/>
</dbReference>
<dbReference type="InterPro" id="IPR013785">
    <property type="entry name" value="Aldolase_TIM"/>
</dbReference>
<dbReference type="InterPro" id="IPR006638">
    <property type="entry name" value="Elp3/MiaA/NifB-like_rSAM"/>
</dbReference>
<dbReference type="InterPro" id="IPR013483">
    <property type="entry name" value="MoaA"/>
</dbReference>
<dbReference type="InterPro" id="IPR000385">
    <property type="entry name" value="MoaA_NifB_PqqE_Fe-S-bd_CS"/>
</dbReference>
<dbReference type="InterPro" id="IPR010505">
    <property type="entry name" value="MoaA_twitch"/>
</dbReference>
<dbReference type="InterPro" id="IPR050105">
    <property type="entry name" value="MoCo_biosynth_MoaA/MoaC"/>
</dbReference>
<dbReference type="InterPro" id="IPR007197">
    <property type="entry name" value="rSAM"/>
</dbReference>
<dbReference type="NCBIfam" id="TIGR02666">
    <property type="entry name" value="moaA"/>
    <property type="match status" value="1"/>
</dbReference>
<dbReference type="PANTHER" id="PTHR22960:SF28">
    <property type="entry name" value="GTP 3',8-CYCLASE"/>
    <property type="match status" value="1"/>
</dbReference>
<dbReference type="PANTHER" id="PTHR22960">
    <property type="entry name" value="MOLYBDOPTERIN COFACTOR SYNTHESIS PROTEIN A"/>
    <property type="match status" value="1"/>
</dbReference>
<dbReference type="Pfam" id="PF06463">
    <property type="entry name" value="Mob_synth_C"/>
    <property type="match status" value="1"/>
</dbReference>
<dbReference type="Pfam" id="PF04055">
    <property type="entry name" value="Radical_SAM"/>
    <property type="match status" value="1"/>
</dbReference>
<dbReference type="SFLD" id="SFLDG01383">
    <property type="entry name" value="cyclic_pyranopterin_phosphate"/>
    <property type="match status" value="1"/>
</dbReference>
<dbReference type="SFLD" id="SFLDS00029">
    <property type="entry name" value="Radical_SAM"/>
    <property type="match status" value="1"/>
</dbReference>
<dbReference type="SMART" id="SM00729">
    <property type="entry name" value="Elp3"/>
    <property type="match status" value="1"/>
</dbReference>
<dbReference type="SUPFAM" id="SSF102114">
    <property type="entry name" value="Radical SAM enzymes"/>
    <property type="match status" value="1"/>
</dbReference>
<dbReference type="PROSITE" id="PS01305">
    <property type="entry name" value="MOAA_NIFB_PQQE"/>
    <property type="match status" value="1"/>
</dbReference>
<dbReference type="PROSITE" id="PS51918">
    <property type="entry name" value="RADICAL_SAM"/>
    <property type="match status" value="1"/>
</dbReference>
<accession>P65386</accession>
<accession>Q8XGT3</accession>
<reference key="1">
    <citation type="journal article" date="2001" name="Nature">
        <title>Complete genome sequence of Salmonella enterica serovar Typhimurium LT2.</title>
        <authorList>
            <person name="McClelland M."/>
            <person name="Sanderson K.E."/>
            <person name="Spieth J."/>
            <person name="Clifton S.W."/>
            <person name="Latreille P."/>
            <person name="Courtney L."/>
            <person name="Porwollik S."/>
            <person name="Ali J."/>
            <person name="Dante M."/>
            <person name="Du F."/>
            <person name="Hou S."/>
            <person name="Layman D."/>
            <person name="Leonard S."/>
            <person name="Nguyen C."/>
            <person name="Scott K."/>
            <person name="Holmes A."/>
            <person name="Grewal N."/>
            <person name="Mulvaney E."/>
            <person name="Ryan E."/>
            <person name="Sun H."/>
            <person name="Florea L."/>
            <person name="Miller W."/>
            <person name="Stoneking T."/>
            <person name="Nhan M."/>
            <person name="Waterston R."/>
            <person name="Wilson R.K."/>
        </authorList>
    </citation>
    <scope>NUCLEOTIDE SEQUENCE [LARGE SCALE GENOMIC DNA]</scope>
    <source>
        <strain>LT2 / SGSC1412 / ATCC 700720</strain>
    </source>
</reference>
<name>MOAA_SALTY</name>
<gene>
    <name evidence="1" type="primary">moaA</name>
    <name type="ordered locus">STM0802</name>
</gene>
<protein>
    <recommendedName>
        <fullName evidence="1">GTP 3',8-cyclase</fullName>
        <ecNumber evidence="1">4.1.99.22</ecNumber>
    </recommendedName>
    <alternativeName>
        <fullName evidence="1">Molybdenum cofactor biosynthesis protein A</fullName>
    </alternativeName>
</protein>
<feature type="chain" id="PRO_0000152988" description="GTP 3',8-cyclase">
    <location>
        <begin position="1"/>
        <end position="329"/>
    </location>
</feature>
<feature type="domain" description="Radical SAM core" evidence="2">
    <location>
        <begin position="8"/>
        <end position="234"/>
    </location>
</feature>
<feature type="binding site" evidence="1">
    <location>
        <position position="17"/>
    </location>
    <ligand>
        <name>GTP</name>
        <dbReference type="ChEBI" id="CHEBI:37565"/>
    </ligand>
</feature>
<feature type="binding site" evidence="1">
    <location>
        <position position="24"/>
    </location>
    <ligand>
        <name>[4Fe-4S] cluster</name>
        <dbReference type="ChEBI" id="CHEBI:49883"/>
        <label>1</label>
        <note>4Fe-4S-S-AdoMet</note>
    </ligand>
</feature>
<feature type="binding site" evidence="1">
    <location>
        <position position="28"/>
    </location>
    <ligand>
        <name>[4Fe-4S] cluster</name>
        <dbReference type="ChEBI" id="CHEBI:49883"/>
        <label>1</label>
        <note>4Fe-4S-S-AdoMet</note>
    </ligand>
</feature>
<feature type="binding site" evidence="1">
    <location>
        <position position="30"/>
    </location>
    <ligand>
        <name>S-adenosyl-L-methionine</name>
        <dbReference type="ChEBI" id="CHEBI:59789"/>
    </ligand>
</feature>
<feature type="binding site" evidence="1">
    <location>
        <position position="31"/>
    </location>
    <ligand>
        <name>[4Fe-4S] cluster</name>
        <dbReference type="ChEBI" id="CHEBI:49883"/>
        <label>1</label>
        <note>4Fe-4S-S-AdoMet</note>
    </ligand>
</feature>
<feature type="binding site" evidence="1">
    <location>
        <position position="68"/>
    </location>
    <ligand>
        <name>GTP</name>
        <dbReference type="ChEBI" id="CHEBI:37565"/>
    </ligand>
</feature>
<feature type="binding site" evidence="1">
    <location>
        <position position="72"/>
    </location>
    <ligand>
        <name>S-adenosyl-L-methionine</name>
        <dbReference type="ChEBI" id="CHEBI:59789"/>
    </ligand>
</feature>
<feature type="binding site" evidence="1">
    <location>
        <position position="99"/>
    </location>
    <ligand>
        <name>GTP</name>
        <dbReference type="ChEBI" id="CHEBI:37565"/>
    </ligand>
</feature>
<feature type="binding site" evidence="1">
    <location>
        <position position="123"/>
    </location>
    <ligand>
        <name>S-adenosyl-L-methionine</name>
        <dbReference type="ChEBI" id="CHEBI:59789"/>
    </ligand>
</feature>
<feature type="binding site" evidence="1">
    <location>
        <position position="160"/>
    </location>
    <ligand>
        <name>GTP</name>
        <dbReference type="ChEBI" id="CHEBI:37565"/>
    </ligand>
</feature>
<feature type="binding site" evidence="1">
    <location>
        <position position="194"/>
    </location>
    <ligand>
        <name>S-adenosyl-L-methionine</name>
        <dbReference type="ChEBI" id="CHEBI:59789"/>
    </ligand>
</feature>
<feature type="binding site" evidence="1">
    <location>
        <position position="257"/>
    </location>
    <ligand>
        <name>[4Fe-4S] cluster</name>
        <dbReference type="ChEBI" id="CHEBI:49883"/>
        <label>2</label>
        <note>4Fe-4S-substrate</note>
    </ligand>
</feature>
<feature type="binding site" evidence="1">
    <location>
        <position position="260"/>
    </location>
    <ligand>
        <name>[4Fe-4S] cluster</name>
        <dbReference type="ChEBI" id="CHEBI:49883"/>
        <label>2</label>
        <note>4Fe-4S-substrate</note>
    </ligand>
</feature>
<feature type="binding site" evidence="1">
    <location>
        <begin position="262"/>
        <end position="264"/>
    </location>
    <ligand>
        <name>GTP</name>
        <dbReference type="ChEBI" id="CHEBI:37565"/>
    </ligand>
</feature>
<feature type="binding site" evidence="1">
    <location>
        <position position="274"/>
    </location>
    <ligand>
        <name>[4Fe-4S] cluster</name>
        <dbReference type="ChEBI" id="CHEBI:49883"/>
        <label>2</label>
        <note>4Fe-4S-substrate</note>
    </ligand>
</feature>